<feature type="chain" id="PRO_0000389603" description="Fibrillarin-like rRNA/tRNA 2'-O-methyltransferase">
    <location>
        <begin position="1"/>
        <end position="200"/>
    </location>
</feature>
<feature type="binding site" evidence="1">
    <location>
        <begin position="62"/>
        <end position="63"/>
    </location>
    <ligand>
        <name>S-adenosyl-L-methionine</name>
        <dbReference type="ChEBI" id="CHEBI:59789"/>
    </ligand>
</feature>
<feature type="binding site" evidence="1">
    <location>
        <begin position="78"/>
        <end position="79"/>
    </location>
    <ligand>
        <name>S-adenosyl-L-methionine</name>
        <dbReference type="ChEBI" id="CHEBI:59789"/>
    </ligand>
</feature>
<feature type="binding site" evidence="1">
    <location>
        <begin position="103"/>
        <end position="104"/>
    </location>
    <ligand>
        <name>S-adenosyl-L-methionine</name>
        <dbReference type="ChEBI" id="CHEBI:59789"/>
    </ligand>
</feature>
<feature type="binding site" evidence="1">
    <location>
        <begin position="123"/>
        <end position="126"/>
    </location>
    <ligand>
        <name>S-adenosyl-L-methionine</name>
        <dbReference type="ChEBI" id="CHEBI:59789"/>
    </ligand>
</feature>
<organism>
    <name type="scientific">Methanoculleus marisnigri (strain ATCC 35101 / DSM 1498 / JR1)</name>
    <dbReference type="NCBI Taxonomy" id="368407"/>
    <lineage>
        <taxon>Archaea</taxon>
        <taxon>Methanobacteriati</taxon>
        <taxon>Methanobacteriota</taxon>
        <taxon>Stenosarchaea group</taxon>
        <taxon>Methanomicrobia</taxon>
        <taxon>Methanomicrobiales</taxon>
        <taxon>Methanomicrobiaceae</taxon>
        <taxon>Methanoculleus</taxon>
    </lineage>
</organism>
<protein>
    <recommendedName>
        <fullName evidence="1">Fibrillarin-like rRNA/tRNA 2'-O-methyltransferase</fullName>
        <ecNumber evidence="1">2.1.1.-</ecNumber>
    </recommendedName>
</protein>
<dbReference type="EC" id="2.1.1.-" evidence="1"/>
<dbReference type="EMBL" id="CP000562">
    <property type="protein sequence ID" value="ABN56475.1"/>
    <property type="molecule type" value="Genomic_DNA"/>
</dbReference>
<dbReference type="RefSeq" id="WP_011843385.1">
    <property type="nucleotide sequence ID" value="NC_009051.1"/>
</dbReference>
<dbReference type="SMR" id="A3CSX5"/>
<dbReference type="STRING" id="368407.Memar_0542"/>
<dbReference type="GeneID" id="4846014"/>
<dbReference type="KEGG" id="mem:Memar_0542"/>
<dbReference type="eggNOG" id="arCOG00078">
    <property type="taxonomic scope" value="Archaea"/>
</dbReference>
<dbReference type="HOGENOM" id="CLU_059055_2_0_2"/>
<dbReference type="OrthoDB" id="6244at2157"/>
<dbReference type="Proteomes" id="UP000002146">
    <property type="component" value="Chromosome"/>
</dbReference>
<dbReference type="GO" id="GO:1990259">
    <property type="term" value="F:histone H2AQ104 methyltransferase activity"/>
    <property type="evidence" value="ECO:0007669"/>
    <property type="project" value="TreeGrafter"/>
</dbReference>
<dbReference type="GO" id="GO:0003723">
    <property type="term" value="F:RNA binding"/>
    <property type="evidence" value="ECO:0007669"/>
    <property type="project" value="UniProtKB-UniRule"/>
</dbReference>
<dbReference type="GO" id="GO:0008649">
    <property type="term" value="F:rRNA methyltransferase activity"/>
    <property type="evidence" value="ECO:0007669"/>
    <property type="project" value="TreeGrafter"/>
</dbReference>
<dbReference type="GO" id="GO:0000494">
    <property type="term" value="P:box C/D sno(s)RNA 3'-end processing"/>
    <property type="evidence" value="ECO:0007669"/>
    <property type="project" value="TreeGrafter"/>
</dbReference>
<dbReference type="GO" id="GO:0008033">
    <property type="term" value="P:tRNA processing"/>
    <property type="evidence" value="ECO:0007669"/>
    <property type="project" value="UniProtKB-UniRule"/>
</dbReference>
<dbReference type="CDD" id="cd02440">
    <property type="entry name" value="AdoMet_MTases"/>
    <property type="match status" value="1"/>
</dbReference>
<dbReference type="Gene3D" id="3.40.50.150">
    <property type="entry name" value="Vaccinia Virus protein VP39"/>
    <property type="match status" value="1"/>
</dbReference>
<dbReference type="HAMAP" id="MF_00351">
    <property type="entry name" value="RNA_methyltransf_FlpA"/>
    <property type="match status" value="1"/>
</dbReference>
<dbReference type="InterPro" id="IPR000692">
    <property type="entry name" value="Fibrillarin"/>
</dbReference>
<dbReference type="InterPro" id="IPR029063">
    <property type="entry name" value="SAM-dependent_MTases_sf"/>
</dbReference>
<dbReference type="NCBIfam" id="NF003276">
    <property type="entry name" value="PRK04266.1-2"/>
    <property type="match status" value="1"/>
</dbReference>
<dbReference type="NCBIfam" id="NF003278">
    <property type="entry name" value="PRK04266.1-4"/>
    <property type="match status" value="1"/>
</dbReference>
<dbReference type="PANTHER" id="PTHR10335:SF17">
    <property type="entry name" value="FIBRILLARIN"/>
    <property type="match status" value="1"/>
</dbReference>
<dbReference type="PANTHER" id="PTHR10335">
    <property type="entry name" value="RRNA 2-O-METHYLTRANSFERASE FIBRILLARIN"/>
    <property type="match status" value="1"/>
</dbReference>
<dbReference type="Pfam" id="PF01269">
    <property type="entry name" value="Fibrillarin"/>
    <property type="match status" value="1"/>
</dbReference>
<dbReference type="PIRSF" id="PIRSF006540">
    <property type="entry name" value="Nop17p"/>
    <property type="match status" value="1"/>
</dbReference>
<dbReference type="PRINTS" id="PR00052">
    <property type="entry name" value="FIBRILLARIN"/>
</dbReference>
<dbReference type="SMART" id="SM01206">
    <property type="entry name" value="Fibrillarin"/>
    <property type="match status" value="1"/>
</dbReference>
<dbReference type="SUPFAM" id="SSF53335">
    <property type="entry name" value="S-adenosyl-L-methionine-dependent methyltransferases"/>
    <property type="match status" value="1"/>
</dbReference>
<evidence type="ECO:0000255" key="1">
    <source>
        <dbReference type="HAMAP-Rule" id="MF_00351"/>
    </source>
</evidence>
<reference key="1">
    <citation type="journal article" date="2009" name="Stand. Genomic Sci.">
        <title>Complete genome sequence of Methanoculleus marisnigri Romesser et al. 1981 type strain JR1.</title>
        <authorList>
            <person name="Anderson I.J."/>
            <person name="Sieprawska-Lupa M."/>
            <person name="Lapidus A."/>
            <person name="Nolan M."/>
            <person name="Copeland A."/>
            <person name="Glavina Del Rio T."/>
            <person name="Tice H."/>
            <person name="Dalin E."/>
            <person name="Barry K."/>
            <person name="Saunders E."/>
            <person name="Han C."/>
            <person name="Brettin T."/>
            <person name="Detter J.C."/>
            <person name="Bruce D."/>
            <person name="Mikhailova N."/>
            <person name="Pitluck S."/>
            <person name="Hauser L."/>
            <person name="Land M."/>
            <person name="Lucas S."/>
            <person name="Richardson P."/>
            <person name="Whitman W.B."/>
            <person name="Kyrpides N.C."/>
        </authorList>
    </citation>
    <scope>NUCLEOTIDE SEQUENCE [LARGE SCALE GENOMIC DNA]</scope>
    <source>
        <strain>ATCC 35101 / DSM 1498 / JR1</strain>
    </source>
</reference>
<accession>A3CSX5</accession>
<proteinExistence type="inferred from homology"/>
<keyword id="KW-0489">Methyltransferase</keyword>
<keyword id="KW-0694">RNA-binding</keyword>
<keyword id="KW-0698">rRNA processing</keyword>
<keyword id="KW-0808">Transferase</keyword>
<keyword id="KW-0819">tRNA processing</keyword>
<gene>
    <name evidence="1" type="primary">flpA</name>
    <name type="ordered locus">Memar_0542</name>
</gene>
<name>FLPA_METMJ</name>
<sequence>MKWLGNVLVSPGEGGVYGERTLDGYRVWDPYRSKLAALYTLGGGVELTPEMRVLYLGAANGTTVSHVADYVETVYAVEFAPRPMQDLLEVARRRRNIVPIMADASRPEEYAPFMEAVDLVYQDVAQPNQVEIAERNLVFLKPGGHLVLMLKTRSVDVRRDPAEVLAGARTGLEERLDIADVRWLDPYHHDHAAIVCSRRE</sequence>
<comment type="function">
    <text evidence="1">Involved in pre-rRNA and tRNA processing. Utilizes the methyl donor S-adenosyl-L-methionine to catalyze the site-specific 2'-hydroxyl methylation of ribose moieties in rRNA and tRNA. Site specificity is provided by a guide RNA that base pairs with the substrate. Methylation occurs at a characteristic distance from the sequence involved in base pairing with the guide RNA.</text>
</comment>
<comment type="subunit">
    <text evidence="1">Interacts with nop5. Component of box C/D small ribonucleoprotein (sRNP) particles that contain rpl7ae, FlpA and nop5, plus a guide RNA.</text>
</comment>
<comment type="similarity">
    <text evidence="1">Belongs to the methyltransferase superfamily. Fibrillarin family.</text>
</comment>